<name>COL14_ARATH</name>
<protein>
    <recommendedName>
        <fullName>Zinc finger protein CONSTANS-LIKE 14</fullName>
    </recommendedName>
</protein>
<evidence type="ECO:0000255" key="1"/>
<evidence type="ECO:0000255" key="2">
    <source>
        <dbReference type="PROSITE-ProRule" id="PRU00024"/>
    </source>
</evidence>
<evidence type="ECO:0000255" key="3">
    <source>
        <dbReference type="PROSITE-ProRule" id="PRU00357"/>
    </source>
</evidence>
<evidence type="ECO:0000256" key="4">
    <source>
        <dbReference type="SAM" id="MobiDB-lite"/>
    </source>
</evidence>
<evidence type="ECO:0000303" key="5">
    <source>
    </source>
</evidence>
<evidence type="ECO:0000305" key="6"/>
<dbReference type="EMBL" id="AC002332">
    <property type="protein sequence ID" value="AAB80667.1"/>
    <property type="status" value="ALT_SEQ"/>
    <property type="molecule type" value="Genomic_DNA"/>
</dbReference>
<dbReference type="EMBL" id="CP002685">
    <property type="protein sequence ID" value="AEC08843.1"/>
    <property type="molecule type" value="Genomic_DNA"/>
</dbReference>
<dbReference type="EMBL" id="CP002685">
    <property type="protein sequence ID" value="AEC08844.1"/>
    <property type="molecule type" value="Genomic_DNA"/>
</dbReference>
<dbReference type="EMBL" id="BT002067">
    <property type="protein sequence ID" value="AAN72078.1"/>
    <property type="molecule type" value="mRNA"/>
</dbReference>
<dbReference type="EMBL" id="AY128321">
    <property type="protein sequence ID" value="AAM91524.1"/>
    <property type="status" value="ALT_INIT"/>
    <property type="molecule type" value="mRNA"/>
</dbReference>
<dbReference type="EMBL" id="BT006572">
    <property type="protein sequence ID" value="AAP21380.1"/>
    <property type="status" value="ALT_INIT"/>
    <property type="molecule type" value="mRNA"/>
</dbReference>
<dbReference type="PIR" id="C84746">
    <property type="entry name" value="C84746"/>
</dbReference>
<dbReference type="RefSeq" id="NP_850211.1">
    <molecule id="O22800-1"/>
    <property type="nucleotide sequence ID" value="NM_179880.2"/>
</dbReference>
<dbReference type="RefSeq" id="NP_973589.1">
    <molecule id="O22800-2"/>
    <property type="nucleotide sequence ID" value="NM_201860.2"/>
</dbReference>
<dbReference type="SMR" id="O22800"/>
<dbReference type="BioGRID" id="3262">
    <property type="interactions" value="17"/>
</dbReference>
<dbReference type="FunCoup" id="O22800">
    <property type="interactions" value="635"/>
</dbReference>
<dbReference type="IntAct" id="O22800">
    <property type="interactions" value="16"/>
</dbReference>
<dbReference type="STRING" id="3702.O22800"/>
<dbReference type="GlyGen" id="O22800">
    <property type="glycosylation" value="1 site"/>
</dbReference>
<dbReference type="iPTMnet" id="O22800"/>
<dbReference type="PaxDb" id="3702-AT2G33500.1"/>
<dbReference type="ProteomicsDB" id="241146">
    <molecule id="O22800-1"/>
</dbReference>
<dbReference type="EnsemblPlants" id="AT2G33500.1">
    <molecule id="O22800-1"/>
    <property type="protein sequence ID" value="AT2G33500.1"/>
    <property type="gene ID" value="AT2G33500"/>
</dbReference>
<dbReference type="EnsemblPlants" id="AT2G33500.2">
    <molecule id="O22800-2"/>
    <property type="protein sequence ID" value="AT2G33500.2"/>
    <property type="gene ID" value="AT2G33500"/>
</dbReference>
<dbReference type="GeneID" id="817915"/>
<dbReference type="Gramene" id="AT2G33500.1">
    <molecule id="O22800-1"/>
    <property type="protein sequence ID" value="AT2G33500.1"/>
    <property type="gene ID" value="AT2G33500"/>
</dbReference>
<dbReference type="Gramene" id="AT2G33500.2">
    <molecule id="O22800-2"/>
    <property type="protein sequence ID" value="AT2G33500.2"/>
    <property type="gene ID" value="AT2G33500"/>
</dbReference>
<dbReference type="KEGG" id="ath:AT2G33500"/>
<dbReference type="Araport" id="AT2G33500"/>
<dbReference type="TAIR" id="AT2G33500">
    <property type="gene designation" value="BBX12"/>
</dbReference>
<dbReference type="eggNOG" id="ENOG502QW4H">
    <property type="taxonomic scope" value="Eukaryota"/>
</dbReference>
<dbReference type="InParanoid" id="O22800"/>
<dbReference type="OMA" id="FFPEAGY"/>
<dbReference type="OrthoDB" id="153872at2759"/>
<dbReference type="PhylomeDB" id="O22800"/>
<dbReference type="PRO" id="PR:O22800"/>
<dbReference type="Proteomes" id="UP000006548">
    <property type="component" value="Chromosome 2"/>
</dbReference>
<dbReference type="ExpressionAtlas" id="O22800">
    <property type="expression patterns" value="baseline and differential"/>
</dbReference>
<dbReference type="GO" id="GO:0005634">
    <property type="term" value="C:nucleus"/>
    <property type="evidence" value="ECO:0007669"/>
    <property type="project" value="UniProtKB-SubCell"/>
</dbReference>
<dbReference type="GO" id="GO:0003700">
    <property type="term" value="F:DNA-binding transcription factor activity"/>
    <property type="evidence" value="ECO:0000250"/>
    <property type="project" value="TAIR"/>
</dbReference>
<dbReference type="GO" id="GO:0008270">
    <property type="term" value="F:zinc ion binding"/>
    <property type="evidence" value="ECO:0007669"/>
    <property type="project" value="UniProtKB-KW"/>
</dbReference>
<dbReference type="GO" id="GO:0006355">
    <property type="term" value="P:regulation of DNA-templated transcription"/>
    <property type="evidence" value="ECO:0000304"/>
    <property type="project" value="TAIR"/>
</dbReference>
<dbReference type="CDD" id="cd19821">
    <property type="entry name" value="Bbox1_BBX-like"/>
    <property type="match status" value="1"/>
</dbReference>
<dbReference type="InterPro" id="IPR010402">
    <property type="entry name" value="CCT_domain"/>
</dbReference>
<dbReference type="InterPro" id="IPR049808">
    <property type="entry name" value="CONSTANS-like_Bbox1"/>
</dbReference>
<dbReference type="InterPro" id="IPR000315">
    <property type="entry name" value="Znf_B-box"/>
</dbReference>
<dbReference type="PANTHER" id="PTHR31717">
    <property type="entry name" value="ZINC FINGER PROTEIN CONSTANS-LIKE 10"/>
    <property type="match status" value="1"/>
</dbReference>
<dbReference type="PANTHER" id="PTHR31717:SF45">
    <property type="entry name" value="ZINC FINGER PROTEIN CONSTANS-LIKE 14-RELATED"/>
    <property type="match status" value="1"/>
</dbReference>
<dbReference type="Pfam" id="PF06203">
    <property type="entry name" value="CCT"/>
    <property type="match status" value="1"/>
</dbReference>
<dbReference type="SMART" id="SM00336">
    <property type="entry name" value="BBOX"/>
    <property type="match status" value="2"/>
</dbReference>
<dbReference type="PROSITE" id="PS51017">
    <property type="entry name" value="CCT"/>
    <property type="match status" value="1"/>
</dbReference>
<dbReference type="PROSITE" id="PS50119">
    <property type="entry name" value="ZF_BBOX"/>
    <property type="match status" value="2"/>
</dbReference>
<feature type="chain" id="PRO_0000113291" description="Zinc finger protein CONSTANS-LIKE 14">
    <location>
        <begin position="1"/>
        <end position="402"/>
    </location>
</feature>
<feature type="domain" description="CCT" evidence="3">
    <location>
        <begin position="357"/>
        <end position="399"/>
    </location>
</feature>
<feature type="zinc finger region" description="B box-type 1; atypical" evidence="2">
    <location>
        <begin position="12"/>
        <end position="54"/>
    </location>
</feature>
<feature type="zinc finger region" description="B box-type 2; atypical" evidence="2">
    <location>
        <begin position="55"/>
        <end position="97"/>
    </location>
</feature>
<feature type="region of interest" description="Disordered" evidence="4">
    <location>
        <begin position="287"/>
        <end position="322"/>
    </location>
</feature>
<feature type="coiled-coil region" evidence="1">
    <location>
        <begin position="345"/>
        <end position="372"/>
    </location>
</feature>
<feature type="compositionally biased region" description="Polar residues" evidence="4">
    <location>
        <begin position="295"/>
        <end position="310"/>
    </location>
</feature>
<feature type="binding site" evidence="2">
    <location>
        <position position="12"/>
    </location>
    <ligand>
        <name>Zn(2+)</name>
        <dbReference type="ChEBI" id="CHEBI:29105"/>
        <label>1</label>
    </ligand>
</feature>
<feature type="binding site" evidence="2">
    <location>
        <position position="15"/>
    </location>
    <ligand>
        <name>Zn(2+)</name>
        <dbReference type="ChEBI" id="CHEBI:29105"/>
        <label>1</label>
    </ligand>
</feature>
<feature type="binding site" evidence="2">
    <location>
        <position position="35"/>
    </location>
    <ligand>
        <name>Zn(2+)</name>
        <dbReference type="ChEBI" id="CHEBI:29105"/>
        <label>1</label>
    </ligand>
</feature>
<feature type="binding site" evidence="2">
    <location>
        <position position="40"/>
    </location>
    <ligand>
        <name>Zn(2+)</name>
        <dbReference type="ChEBI" id="CHEBI:29105"/>
        <label>1</label>
    </ligand>
</feature>
<feature type="binding site" evidence="2">
    <location>
        <position position="55"/>
    </location>
    <ligand>
        <name>Zn(2+)</name>
        <dbReference type="ChEBI" id="CHEBI:29105"/>
        <label>2</label>
    </ligand>
</feature>
<feature type="binding site" evidence="2">
    <location>
        <position position="58"/>
    </location>
    <ligand>
        <name>Zn(2+)</name>
        <dbReference type="ChEBI" id="CHEBI:29105"/>
        <label>2</label>
    </ligand>
</feature>
<feature type="binding site" evidence="2">
    <location>
        <position position="78"/>
    </location>
    <ligand>
        <name>Zn(2+)</name>
        <dbReference type="ChEBI" id="CHEBI:29105"/>
        <label>2</label>
    </ligand>
</feature>
<feature type="binding site" evidence="2">
    <location>
        <position position="83"/>
    </location>
    <ligand>
        <name>Zn(2+)</name>
        <dbReference type="ChEBI" id="CHEBI:29105"/>
        <label>2</label>
    </ligand>
</feature>
<feature type="splice variant" id="VSP_041588" description="In isoform 2." evidence="5">
    <location>
        <position position="289"/>
    </location>
</feature>
<comment type="interaction">
    <interactant intactId="EBI-15192033">
        <id>O22800-2</id>
    </interactant>
    <interactant intactId="EBI-15192077">
        <id>Q9SJU5</id>
        <label>BBX18</label>
    </interactant>
    <organismsDiffer>false</organismsDiffer>
    <experiments>3</experiments>
</comment>
<comment type="interaction">
    <interactant intactId="EBI-15192033">
        <id>O22800-2</id>
    </interactant>
    <interactant intactId="EBI-4430993">
        <id>C0SVM5</id>
        <label>BBX19</label>
    </interactant>
    <organismsDiffer>false</organismsDiffer>
    <experiments>3</experiments>
</comment>
<comment type="interaction">
    <interactant intactId="EBI-15192033">
        <id>O22800-2</id>
    </interactant>
    <interactant intactId="EBI-15192709">
        <id>Q6NLH4</id>
        <label>BBX29</label>
    </interactant>
    <organismsDiffer>false</organismsDiffer>
    <experiments>4</experiments>
</comment>
<comment type="interaction">
    <interactant intactId="EBI-15192033">
        <id>O22800-2</id>
    </interactant>
    <interactant intactId="EBI-15196639">
        <id>Q8L999-2</id>
        <label>BPC6</label>
    </interactant>
    <organismsDiffer>false</organismsDiffer>
    <experiments>4</experiments>
</comment>
<comment type="interaction">
    <interactant intactId="EBI-15192033">
        <id>O22800-2</id>
    </interactant>
    <interactant intactId="EBI-15191571">
        <id>Q4PSE2</id>
        <label>NFYC8</label>
    </interactant>
    <organismsDiffer>false</organismsDiffer>
    <experiments>3</experiments>
</comment>
<comment type="interaction">
    <interactant intactId="EBI-15192033">
        <id>O22800-2</id>
    </interactant>
    <interactant intactId="EBI-2466050">
        <id>Q8L4B2</id>
        <label>NFYC9</label>
    </interactant>
    <organismsDiffer>false</organismsDiffer>
    <experiments>3</experiments>
</comment>
<comment type="interaction">
    <interactant intactId="EBI-15192033">
        <id>O22800-2</id>
    </interactant>
    <interactant intactId="EBI-15193025">
        <id>Q9LXU1</id>
        <label>NOT9B</label>
    </interactant>
    <organismsDiffer>false</organismsDiffer>
    <experiments>3</experiments>
</comment>
<comment type="subcellular location">
    <subcellularLocation>
        <location evidence="3">Nucleus</location>
    </subcellularLocation>
</comment>
<comment type="alternative products">
    <event type="alternative splicing"/>
    <isoform>
        <id>O22800-1</id>
        <name>1</name>
        <sequence type="displayed"/>
    </isoform>
    <isoform>
        <id>O22800-2</id>
        <name>2</name>
        <sequence type="described" ref="VSP_041588"/>
    </isoform>
</comment>
<comment type="similarity">
    <text evidence="6">Belongs to the CONSTANS family.</text>
</comment>
<comment type="sequence caution" evidence="6">
    <conflict type="erroneous gene model prediction">
        <sequence resource="EMBL-CDS" id="AAB80667"/>
    </conflict>
</comment>
<comment type="sequence caution" evidence="6">
    <conflict type="erroneous initiation">
        <sequence resource="EMBL-CDS" id="AAM91524"/>
    </conflict>
    <text>Truncated N-terminus.</text>
</comment>
<comment type="sequence caution" evidence="6">
    <conflict type="erroneous initiation">
        <sequence resource="EMBL-CDS" id="AAP21380"/>
    </conflict>
    <text>Truncated N-terminus.</text>
</comment>
<proteinExistence type="evidence at protein level"/>
<gene>
    <name type="primary">COL14</name>
    <name type="ordered locus">At2g33500</name>
    <name type="ORF">F4P9.27</name>
</gene>
<organism>
    <name type="scientific">Arabidopsis thaliana</name>
    <name type="common">Mouse-ear cress</name>
    <dbReference type="NCBI Taxonomy" id="3702"/>
    <lineage>
        <taxon>Eukaryota</taxon>
        <taxon>Viridiplantae</taxon>
        <taxon>Streptophyta</taxon>
        <taxon>Embryophyta</taxon>
        <taxon>Tracheophyta</taxon>
        <taxon>Spermatophyta</taxon>
        <taxon>Magnoliopsida</taxon>
        <taxon>eudicotyledons</taxon>
        <taxon>Gunneridae</taxon>
        <taxon>Pentapetalae</taxon>
        <taxon>rosids</taxon>
        <taxon>malvids</taxon>
        <taxon>Brassicales</taxon>
        <taxon>Brassicaceae</taxon>
        <taxon>Camelineae</taxon>
        <taxon>Arabidopsis</taxon>
    </lineage>
</organism>
<sequence length="402" mass="44520">MGTSTTESVVACEFCGERTAVLFCRADTAKLCLPCDQHVHSANLLSRKHVRSQICDNCSKEPVSVRCFTDNLVLCQECDWDVHGSCSSSATHERSAVEGFSGCPSVLELAAVWGIDLKGKKKEDDEDELTKNFGMGLDSWGSGSNIVQELIVPYDVSCKKQSFSFGRSKQVVFEQLELLKRGFVEGEGEIMVPEGINGGGSISQPSPTTSFTSLLMSQSLCGNGMQWNATNHSTGQNTQIWDFNLGQSRNPDEPSPVETKGSTFTFNNVTHLKNDTRTTNMNAFKESYQQEDSVHSTSTKGQETSKSNNIPAAIHSHKSSNDSCGLHCTEHIAITSNRATRLVAVTNADLEQMAQNRDNAMQRYKEKKKTRRYDKTIRYETRKARAETRLRVKGRFVKATDP</sequence>
<accession>O22800</accession>
<accession>Q8H0T2</accession>
<accession>Q8L7Q6</accession>
<reference key="1">
    <citation type="journal article" date="1999" name="Nature">
        <title>Sequence and analysis of chromosome 2 of the plant Arabidopsis thaliana.</title>
        <authorList>
            <person name="Lin X."/>
            <person name="Kaul S."/>
            <person name="Rounsley S.D."/>
            <person name="Shea T.P."/>
            <person name="Benito M.-I."/>
            <person name="Town C.D."/>
            <person name="Fujii C.Y."/>
            <person name="Mason T.M."/>
            <person name="Bowman C.L."/>
            <person name="Barnstead M.E."/>
            <person name="Feldblyum T.V."/>
            <person name="Buell C.R."/>
            <person name="Ketchum K.A."/>
            <person name="Lee J.J."/>
            <person name="Ronning C.M."/>
            <person name="Koo H.L."/>
            <person name="Moffat K.S."/>
            <person name="Cronin L.A."/>
            <person name="Shen M."/>
            <person name="Pai G."/>
            <person name="Van Aken S."/>
            <person name="Umayam L."/>
            <person name="Tallon L.J."/>
            <person name="Gill J.E."/>
            <person name="Adams M.D."/>
            <person name="Carrera A.J."/>
            <person name="Creasy T.H."/>
            <person name="Goodman H.M."/>
            <person name="Somerville C.R."/>
            <person name="Copenhaver G.P."/>
            <person name="Preuss D."/>
            <person name="Nierman W.C."/>
            <person name="White O."/>
            <person name="Eisen J.A."/>
            <person name="Salzberg S.L."/>
            <person name="Fraser C.M."/>
            <person name="Venter J.C."/>
        </authorList>
    </citation>
    <scope>NUCLEOTIDE SEQUENCE [LARGE SCALE GENOMIC DNA]</scope>
    <source>
        <strain>cv. Columbia</strain>
    </source>
</reference>
<reference key="2">
    <citation type="journal article" date="2017" name="Plant J.">
        <title>Araport11: a complete reannotation of the Arabidopsis thaliana reference genome.</title>
        <authorList>
            <person name="Cheng C.Y."/>
            <person name="Krishnakumar V."/>
            <person name="Chan A.P."/>
            <person name="Thibaud-Nissen F."/>
            <person name="Schobel S."/>
            <person name="Town C.D."/>
        </authorList>
    </citation>
    <scope>GENOME REANNOTATION</scope>
    <source>
        <strain>cv. Columbia</strain>
    </source>
</reference>
<reference key="3">
    <citation type="journal article" date="2003" name="Science">
        <title>Empirical analysis of transcriptional activity in the Arabidopsis genome.</title>
        <authorList>
            <person name="Yamada K."/>
            <person name="Lim J."/>
            <person name="Dale J.M."/>
            <person name="Chen H."/>
            <person name="Shinn P."/>
            <person name="Palm C.J."/>
            <person name="Southwick A.M."/>
            <person name="Wu H.C."/>
            <person name="Kim C.J."/>
            <person name="Nguyen M."/>
            <person name="Pham P.K."/>
            <person name="Cheuk R.F."/>
            <person name="Karlin-Newmann G."/>
            <person name="Liu S.X."/>
            <person name="Lam B."/>
            <person name="Sakano H."/>
            <person name="Wu T."/>
            <person name="Yu G."/>
            <person name="Miranda M."/>
            <person name="Quach H.L."/>
            <person name="Tripp M."/>
            <person name="Chang C.H."/>
            <person name="Lee J.M."/>
            <person name="Toriumi M.J."/>
            <person name="Chan M.M."/>
            <person name="Tang C.C."/>
            <person name="Onodera C.S."/>
            <person name="Deng J.M."/>
            <person name="Akiyama K."/>
            <person name="Ansari Y."/>
            <person name="Arakawa T."/>
            <person name="Banh J."/>
            <person name="Banno F."/>
            <person name="Bowser L."/>
            <person name="Brooks S.Y."/>
            <person name="Carninci P."/>
            <person name="Chao Q."/>
            <person name="Choy N."/>
            <person name="Enju A."/>
            <person name="Goldsmith A.D."/>
            <person name="Gurjal M."/>
            <person name="Hansen N.F."/>
            <person name="Hayashizaki Y."/>
            <person name="Johnson-Hopson C."/>
            <person name="Hsuan V.W."/>
            <person name="Iida K."/>
            <person name="Karnes M."/>
            <person name="Khan S."/>
            <person name="Koesema E."/>
            <person name="Ishida J."/>
            <person name="Jiang P.X."/>
            <person name="Jones T."/>
            <person name="Kawai J."/>
            <person name="Kamiya A."/>
            <person name="Meyers C."/>
            <person name="Nakajima M."/>
            <person name="Narusaka M."/>
            <person name="Seki M."/>
            <person name="Sakurai T."/>
            <person name="Satou M."/>
            <person name="Tamse R."/>
            <person name="Vaysberg M."/>
            <person name="Wallender E.K."/>
            <person name="Wong C."/>
            <person name="Yamamura Y."/>
            <person name="Yuan S."/>
            <person name="Shinozaki K."/>
            <person name="Davis R.W."/>
            <person name="Theologis A."/>
            <person name="Ecker J.R."/>
        </authorList>
    </citation>
    <scope>NUCLEOTIDE SEQUENCE [LARGE SCALE MRNA] (ISOFORMS 1 AND 2)</scope>
    <source>
        <strain>cv. Columbia</strain>
    </source>
</reference>
<reference key="4">
    <citation type="journal article" date="2003" name="Plant Physiol.">
        <title>The evolution of CONSTANS-like gene families in barley, rice, and Arabidopsis.</title>
        <authorList>
            <person name="Griffiths S."/>
            <person name="Dunford R.P."/>
            <person name="Coupland G."/>
            <person name="Laurie D.A."/>
        </authorList>
    </citation>
    <scope>GENE FAMILY</scope>
    <scope>NOMENCLATURE</scope>
</reference>
<keyword id="KW-0025">Alternative splicing</keyword>
<keyword id="KW-0175">Coiled coil</keyword>
<keyword id="KW-0479">Metal-binding</keyword>
<keyword id="KW-0539">Nucleus</keyword>
<keyword id="KW-1185">Reference proteome</keyword>
<keyword id="KW-0677">Repeat</keyword>
<keyword id="KW-0862">Zinc</keyword>
<keyword id="KW-0863">Zinc-finger</keyword>